<evidence type="ECO:0000255" key="1">
    <source>
        <dbReference type="HAMAP-Rule" id="MF_00465"/>
    </source>
</evidence>
<accession>P0A7F7</accession>
<accession>P09159</accession>
<proteinExistence type="inferred from homology"/>
<reference key="1">
    <citation type="journal article" date="2001" name="Nature">
        <title>Genome sequence of enterohaemorrhagic Escherichia coli O157:H7.</title>
        <authorList>
            <person name="Perna N.T."/>
            <person name="Plunkett G. III"/>
            <person name="Burland V."/>
            <person name="Mau B."/>
            <person name="Glasner J.D."/>
            <person name="Rose D.J."/>
            <person name="Mayhew G.F."/>
            <person name="Evans P.S."/>
            <person name="Gregor J."/>
            <person name="Kirkpatrick H.A."/>
            <person name="Posfai G."/>
            <person name="Hackett J."/>
            <person name="Klink S."/>
            <person name="Boutin A."/>
            <person name="Shao Y."/>
            <person name="Miller L."/>
            <person name="Grotbeck E.J."/>
            <person name="Davis N.W."/>
            <person name="Lim A."/>
            <person name="Dimalanta E.T."/>
            <person name="Potamousis K."/>
            <person name="Apodaca J."/>
            <person name="Anantharaman T.S."/>
            <person name="Lin J."/>
            <person name="Yen G."/>
            <person name="Schwartz D.C."/>
            <person name="Welch R.A."/>
            <person name="Blattner F.R."/>
        </authorList>
    </citation>
    <scope>NUCLEOTIDE SEQUENCE [LARGE SCALE GENOMIC DNA]</scope>
    <source>
        <strain>O157:H7 / EDL933 / ATCC 700927 / EHEC</strain>
    </source>
</reference>
<reference key="2">
    <citation type="journal article" date="2001" name="DNA Res.">
        <title>Complete genome sequence of enterohemorrhagic Escherichia coli O157:H7 and genomic comparison with a laboratory strain K-12.</title>
        <authorList>
            <person name="Hayashi T."/>
            <person name="Makino K."/>
            <person name="Ohnishi M."/>
            <person name="Kurokawa K."/>
            <person name="Ishii K."/>
            <person name="Yokoyama K."/>
            <person name="Han C.-G."/>
            <person name="Ohtsubo E."/>
            <person name="Nakayama K."/>
            <person name="Murata T."/>
            <person name="Tanaka M."/>
            <person name="Tobe T."/>
            <person name="Iida T."/>
            <person name="Takami H."/>
            <person name="Honda T."/>
            <person name="Sasakawa C."/>
            <person name="Ogasawara N."/>
            <person name="Yasunaga T."/>
            <person name="Kuhara S."/>
            <person name="Shiba T."/>
            <person name="Hattori M."/>
            <person name="Shinagawa H."/>
        </authorList>
    </citation>
    <scope>NUCLEOTIDE SEQUENCE [LARGE SCALE GENOMIC DNA]</scope>
    <source>
        <strain>O157:H7 / Sakai / RIMD 0509952 / EHEC</strain>
    </source>
</reference>
<keyword id="KW-0068">Autocatalytic cleavage</keyword>
<keyword id="KW-0210">Decarboxylase</keyword>
<keyword id="KW-0456">Lyase</keyword>
<keyword id="KW-0620">Polyamine biosynthesis</keyword>
<keyword id="KW-0670">Pyruvate</keyword>
<keyword id="KW-1185">Reference proteome</keyword>
<keyword id="KW-0949">S-adenosyl-L-methionine</keyword>
<keyword id="KW-0704">Schiff base</keyword>
<keyword id="KW-0745">Spermidine biosynthesis</keyword>
<keyword id="KW-0865">Zymogen</keyword>
<dbReference type="EC" id="4.1.1.50" evidence="1"/>
<dbReference type="EMBL" id="AE005174">
    <property type="protein sequence ID" value="AAG54424.1"/>
    <property type="molecule type" value="Genomic_DNA"/>
</dbReference>
<dbReference type="EMBL" id="BA000007">
    <property type="protein sequence ID" value="BAB33547.1"/>
    <property type="molecule type" value="Genomic_DNA"/>
</dbReference>
<dbReference type="PIR" id="D85495">
    <property type="entry name" value="D85495"/>
</dbReference>
<dbReference type="PIR" id="D90644">
    <property type="entry name" value="D90644"/>
</dbReference>
<dbReference type="RefSeq" id="NP_308151.1">
    <property type="nucleotide sequence ID" value="NC_002695.1"/>
</dbReference>
<dbReference type="RefSeq" id="WP_000734287.1">
    <property type="nucleotide sequence ID" value="NZ_VOAI01000002.1"/>
</dbReference>
<dbReference type="STRING" id="155864.Z0130"/>
<dbReference type="GeneID" id="913693"/>
<dbReference type="GeneID" id="93777316"/>
<dbReference type="KEGG" id="ece:Z0130"/>
<dbReference type="KEGG" id="ecs:ECs_0124"/>
<dbReference type="PATRIC" id="fig|386585.9.peg.222"/>
<dbReference type="eggNOG" id="COG1586">
    <property type="taxonomic scope" value="Bacteria"/>
</dbReference>
<dbReference type="HOGENOM" id="CLU_092007_0_0_6"/>
<dbReference type="OMA" id="HVTVHTY"/>
<dbReference type="UniPathway" id="UPA00331">
    <property type="reaction ID" value="UER00451"/>
</dbReference>
<dbReference type="Proteomes" id="UP000000558">
    <property type="component" value="Chromosome"/>
</dbReference>
<dbReference type="Proteomes" id="UP000002519">
    <property type="component" value="Chromosome"/>
</dbReference>
<dbReference type="GO" id="GO:0005829">
    <property type="term" value="C:cytosol"/>
    <property type="evidence" value="ECO:0007669"/>
    <property type="project" value="TreeGrafter"/>
</dbReference>
<dbReference type="GO" id="GO:0004014">
    <property type="term" value="F:adenosylmethionine decarboxylase activity"/>
    <property type="evidence" value="ECO:0007669"/>
    <property type="project" value="UniProtKB-UniRule"/>
</dbReference>
<dbReference type="GO" id="GO:0008295">
    <property type="term" value="P:spermidine biosynthetic process"/>
    <property type="evidence" value="ECO:0007669"/>
    <property type="project" value="UniProtKB-UniRule"/>
</dbReference>
<dbReference type="FunFam" id="3.60.90.10:FF:000001">
    <property type="entry name" value="S-adenosylmethionine decarboxylase proenzyme"/>
    <property type="match status" value="1"/>
</dbReference>
<dbReference type="Gene3D" id="3.60.90.10">
    <property type="entry name" value="S-adenosylmethionine decarboxylase"/>
    <property type="match status" value="1"/>
</dbReference>
<dbReference type="HAMAP" id="MF_00465">
    <property type="entry name" value="AdoMetDC_2"/>
    <property type="match status" value="1"/>
</dbReference>
<dbReference type="InterPro" id="IPR003826">
    <property type="entry name" value="AdoMetDC_fam_prok"/>
</dbReference>
<dbReference type="InterPro" id="IPR009165">
    <property type="entry name" value="S-AdoMet_deCO2ase_bac"/>
</dbReference>
<dbReference type="InterPro" id="IPR016067">
    <property type="entry name" value="S-AdoMet_deCO2ase_core"/>
</dbReference>
<dbReference type="NCBIfam" id="TIGR03331">
    <property type="entry name" value="SAM_DCase_Eco"/>
    <property type="match status" value="1"/>
</dbReference>
<dbReference type="PANTHER" id="PTHR33866">
    <property type="entry name" value="S-ADENOSYLMETHIONINE DECARBOXYLASE PROENZYME"/>
    <property type="match status" value="1"/>
</dbReference>
<dbReference type="PANTHER" id="PTHR33866:SF1">
    <property type="entry name" value="S-ADENOSYLMETHIONINE DECARBOXYLASE PROENZYME"/>
    <property type="match status" value="1"/>
</dbReference>
<dbReference type="Pfam" id="PF02675">
    <property type="entry name" value="AdoMet_dc"/>
    <property type="match status" value="1"/>
</dbReference>
<dbReference type="PIRSF" id="PIRSF001356">
    <property type="entry name" value="SAM_decarboxylas"/>
    <property type="match status" value="1"/>
</dbReference>
<dbReference type="SUPFAM" id="SSF56276">
    <property type="entry name" value="S-adenosylmethionine decarboxylase"/>
    <property type="match status" value="1"/>
</dbReference>
<organism>
    <name type="scientific">Escherichia coli O157:H7</name>
    <dbReference type="NCBI Taxonomy" id="83334"/>
    <lineage>
        <taxon>Bacteria</taxon>
        <taxon>Pseudomonadati</taxon>
        <taxon>Pseudomonadota</taxon>
        <taxon>Gammaproteobacteria</taxon>
        <taxon>Enterobacterales</taxon>
        <taxon>Enterobacteriaceae</taxon>
        <taxon>Escherichia</taxon>
    </lineage>
</organism>
<comment type="function">
    <text evidence="1">Catalyzes the decarboxylation of S-adenosylmethionine to S-adenosylmethioninamine (dcAdoMet), the propylamine donor required for the synthesis of the polyamines spermine and spermidine from the diamine putrescine.</text>
</comment>
<comment type="catalytic activity">
    <reaction evidence="1">
        <text>S-adenosyl-L-methionine + H(+) = S-adenosyl 3-(methylsulfanyl)propylamine + CO2</text>
        <dbReference type="Rhea" id="RHEA:15981"/>
        <dbReference type="ChEBI" id="CHEBI:15378"/>
        <dbReference type="ChEBI" id="CHEBI:16526"/>
        <dbReference type="ChEBI" id="CHEBI:57443"/>
        <dbReference type="ChEBI" id="CHEBI:59789"/>
        <dbReference type="EC" id="4.1.1.50"/>
    </reaction>
</comment>
<comment type="cofactor">
    <cofactor evidence="1">
        <name>pyruvate</name>
        <dbReference type="ChEBI" id="CHEBI:15361"/>
    </cofactor>
    <text evidence="1">Binds 1 pyruvoyl group covalently per subunit.</text>
</comment>
<comment type="pathway">
    <text evidence="1">Amine and polyamine biosynthesis; S-adenosylmethioninamine biosynthesis; S-adenosylmethioninamine from S-adenosyl-L-methionine: step 1/1.</text>
</comment>
<comment type="subunit">
    <text evidence="1">Heterooctamer of four alpha and four beta chains arranged as a tetramer of alpha/beta heterodimers.</text>
</comment>
<comment type="PTM">
    <text evidence="1">Is synthesized initially as an inactive proenzyme. Formation of the active enzyme involves a self-maturation process in which the active site pyruvoyl group is generated from an internal serine residue via an autocatalytic post-translational modification. Two non-identical subunits are generated from the proenzyme in this reaction, and the pyruvate is formed at the N-terminus of the alpha chain, which is derived from the carboxyl end of the proenzyme. The post-translation cleavage follows an unusual pathway, termed non-hydrolytic serinolysis, in which the side chain hydroxyl group of the serine supplies its oxygen atom to form the C-terminus of the beta chain, while the remainder of the serine residue undergoes an oxidative deamination to produce ammonia and the pyruvoyl group blocking the N-terminus of the alpha chain.</text>
</comment>
<comment type="similarity">
    <text evidence="1">Belongs to the prokaryotic AdoMetDC family. Type 2 subfamily.</text>
</comment>
<protein>
    <recommendedName>
        <fullName evidence="1">S-adenosylmethionine decarboxylase proenzyme</fullName>
        <shortName evidence="1">AdoMetDC</shortName>
        <shortName evidence="1">SAMDC</shortName>
        <ecNumber evidence="1">4.1.1.50</ecNumber>
    </recommendedName>
    <component>
        <recommendedName>
            <fullName evidence="1">S-adenosylmethionine decarboxylase beta chain</fullName>
        </recommendedName>
    </component>
    <component>
        <recommendedName>
            <fullName evidence="1">S-adenosylmethionine decarboxylase alpha chain</fullName>
        </recommendedName>
    </component>
</protein>
<feature type="chain" id="PRO_0000030045" description="S-adenosylmethionine decarboxylase beta chain" evidence="1">
    <location>
        <begin position="1"/>
        <end position="111"/>
    </location>
</feature>
<feature type="chain" id="PRO_0000030046" description="S-adenosylmethionine decarboxylase alpha chain" evidence="1">
    <location>
        <begin position="112"/>
        <end position="264"/>
    </location>
</feature>
<feature type="active site" description="Schiff-base intermediate with substrate; via pyruvic acid" evidence="1">
    <location>
        <position position="112"/>
    </location>
</feature>
<feature type="active site" description="Proton acceptor; for processing activity" evidence="1">
    <location>
        <position position="117"/>
    </location>
</feature>
<feature type="active site" description="Proton donor; for catalytic activity" evidence="1">
    <location>
        <position position="140"/>
    </location>
</feature>
<feature type="site" description="Cleavage (non-hydrolytic); by autolysis" evidence="1">
    <location>
        <begin position="111"/>
        <end position="112"/>
    </location>
</feature>
<feature type="modified residue" description="Pyruvic acid (Ser); by autocatalysis" evidence="1">
    <location>
        <position position="112"/>
    </location>
</feature>
<name>SPED_ECO57</name>
<gene>
    <name evidence="1" type="primary">speD</name>
    <name type="ordered locus">Z0130</name>
    <name type="ordered locus">ECs0124</name>
</gene>
<sequence length="264" mass="30385">MKKLKLHGFNNLTKSLSFCIYDICYAKTAEERDGYIAYIDELYNANRLTEILSETCSIIGANILNIARQDYEPQGASVTILVSEEPVDPKLIDKTEHPGPLPETVVAHLDKSHICVHTYPESHPEGGLCTFRADIEVSTCGVISPLKALNYLIHQLESDIVTIDYRVRGFTRDINGMKHFIDHEINSIQNFMSDDMKALYDMVDVNVYQENIFHTKMLLKEFDLKHYMFHTKPEDLTDSERQEITAALWKEMREIYYGRNMPAV</sequence>